<comment type="function">
    <text evidence="1">Ubiquitin exists either covalently attached to another protein, or free (unanchored). When covalently bound, it is conjugated to target proteins via an isopeptide bond either as a monomer (monoubiquitin), a polymer linked via different Lys residues of the ubiquitin (polyubiquitin chains) or a linear polymer linked via the initiator Met of the ubiquitin (linear polyubiquitin chains). Polyubiquitin chains, when attached to a target protein, have different functions depending on the Lys residue of the ubiquitin that is linked: Lys-6-linked may be involved in DNA repair; Lys-11-linked is involved in ERAD (endoplasmic reticulum-associated degradation) and in cell-cycle regulation; Lys-29-linked is involved in lysosomal degradation; Lys-33-linked is involved in kinase modification; Lys-48-linked is involved in protein degradation via the proteasome; Lys-63-linked is involved in endocytosis, DNA-damage responses as well as in signaling processes leading to activation of the transcription factor NF-kappa-B. Linear polymer chains formed via attachment by the initiator Met lead to cell signaling. Ubiquitin is usually conjugated to Lys residues of target proteins, however, in rare cases, conjugation to Cys or Ser residues has been observed. When polyubiquitin is free (unanchored-polyubiquitin), it also has distinct roles, such as in activation of protein kinases, and in signaling (By similarity).</text>
</comment>
<comment type="subcellular location">
    <subcellularLocation>
        <location evidence="1">Cytoplasm</location>
    </subcellularLocation>
    <subcellularLocation>
        <location evidence="1">Nucleus</location>
    </subcellularLocation>
</comment>
<comment type="miscellaneous">
    <text>Ubiquitin is generally synthesized as a polyubiquitin precursor with tandem head to tail repeats. Often, there is one to three additional amino acids after the last repeat, removed in the mature protein. Alternatively, ubiquitin extension protein is synthesized as a single copy of ubiquitin fused to a ribosomal protein (either L40 or S27A) or to an ubiquitin-related protein (either RUB1 or RUB2). Following translation, extension protein is cleaved from ubiquitin.</text>
</comment>
<comment type="miscellaneous">
    <text>For the sake of clarity sequence features are annotated only for the first chain, and are not repeated for each of the following chains.</text>
</comment>
<comment type="similarity">
    <text evidence="3">Belongs to the ubiquitin family.</text>
</comment>
<reference key="1">
    <citation type="journal article" date="1986" name="Eur. J. Biochem.">
        <title>Structure and expression of ubiquitin genes in higher plants.</title>
        <authorList>
            <person name="Gausing K."/>
            <person name="Barkardottir R."/>
        </authorList>
    </citation>
    <scope>NUCLEOTIDE SEQUENCE [MRNA]</scope>
    <source>
        <strain>cv. Bomi</strain>
        <tissue>Leaf</tissue>
    </source>
</reference>
<proteinExistence type="evidence at transcript level"/>
<organism>
    <name type="scientific">Hordeum vulgare</name>
    <name type="common">Barley</name>
    <dbReference type="NCBI Taxonomy" id="4513"/>
    <lineage>
        <taxon>Eukaryota</taxon>
        <taxon>Viridiplantae</taxon>
        <taxon>Streptophyta</taxon>
        <taxon>Embryophyta</taxon>
        <taxon>Tracheophyta</taxon>
        <taxon>Spermatophyta</taxon>
        <taxon>Magnoliopsida</taxon>
        <taxon>Liliopsida</taxon>
        <taxon>Poales</taxon>
        <taxon>Poaceae</taxon>
        <taxon>BOP clade</taxon>
        <taxon>Pooideae</taxon>
        <taxon>Triticodae</taxon>
        <taxon>Triticeae</taxon>
        <taxon>Hordeinae</taxon>
        <taxon>Hordeum</taxon>
    </lineage>
</organism>
<dbReference type="EMBL" id="X04133">
    <property type="protein sequence ID" value="CAA27751.1"/>
    <property type="molecule type" value="mRNA"/>
</dbReference>
<dbReference type="PIR" id="A25062">
    <property type="entry name" value="A25062"/>
</dbReference>
<dbReference type="SMR" id="P0CG83"/>
<dbReference type="GO" id="GO:0005737">
    <property type="term" value="C:cytoplasm"/>
    <property type="evidence" value="ECO:0007669"/>
    <property type="project" value="UniProtKB-SubCell"/>
</dbReference>
<dbReference type="GO" id="GO:0005634">
    <property type="term" value="C:nucleus"/>
    <property type="evidence" value="ECO:0007669"/>
    <property type="project" value="UniProtKB-SubCell"/>
</dbReference>
<dbReference type="GO" id="GO:0003729">
    <property type="term" value="F:mRNA binding"/>
    <property type="evidence" value="ECO:0007669"/>
    <property type="project" value="UniProtKB-ARBA"/>
</dbReference>
<dbReference type="CDD" id="cd01803">
    <property type="entry name" value="Ubl_ubiquitin"/>
    <property type="match status" value="2"/>
</dbReference>
<dbReference type="FunFam" id="3.10.20.90:FF:000016">
    <property type="entry name" value="Polyubiquitin 3"/>
    <property type="match status" value="2"/>
</dbReference>
<dbReference type="Gene3D" id="3.10.20.90">
    <property type="entry name" value="Phosphatidylinositol 3-kinase Catalytic Subunit, Chain A, domain 1"/>
    <property type="match status" value="3"/>
</dbReference>
<dbReference type="InterPro" id="IPR000626">
    <property type="entry name" value="Ubiquitin-like_dom"/>
</dbReference>
<dbReference type="InterPro" id="IPR029071">
    <property type="entry name" value="Ubiquitin-like_domsf"/>
</dbReference>
<dbReference type="InterPro" id="IPR019954">
    <property type="entry name" value="Ubiquitin_CS"/>
</dbReference>
<dbReference type="InterPro" id="IPR019956">
    <property type="entry name" value="Ubiquitin_dom"/>
</dbReference>
<dbReference type="InterPro" id="IPR050158">
    <property type="entry name" value="Ubiquitin_ubiquitin-like"/>
</dbReference>
<dbReference type="PANTHER" id="PTHR10666">
    <property type="entry name" value="UBIQUITIN"/>
    <property type="match status" value="1"/>
</dbReference>
<dbReference type="Pfam" id="PF00240">
    <property type="entry name" value="ubiquitin"/>
    <property type="match status" value="2"/>
</dbReference>
<dbReference type="PRINTS" id="PR00348">
    <property type="entry name" value="UBIQUITIN"/>
</dbReference>
<dbReference type="SMART" id="SM00213">
    <property type="entry name" value="UBQ"/>
    <property type="match status" value="2"/>
</dbReference>
<dbReference type="SUPFAM" id="SSF54236">
    <property type="entry name" value="Ubiquitin-like"/>
    <property type="match status" value="2"/>
</dbReference>
<dbReference type="PROSITE" id="PS00299">
    <property type="entry name" value="UBIQUITIN_1"/>
    <property type="match status" value="2"/>
</dbReference>
<dbReference type="PROSITE" id="PS50053">
    <property type="entry name" value="UBIQUITIN_2"/>
    <property type="match status" value="2"/>
</dbReference>
<keyword id="KW-0963">Cytoplasm</keyword>
<keyword id="KW-1017">Isopeptide bond</keyword>
<keyword id="KW-0539">Nucleus</keyword>
<keyword id="KW-0677">Repeat</keyword>
<keyword id="KW-0832">Ubl conjugation</keyword>
<sequence length="171" mass="19239">YNIQKESTLHLVLRLRGGMQIFVKTLTGKTITLEVESSDTIDNVKAKIQDKEGIPPDQQRLIFAGKQLEDGRTLADYNIQKESTLHLVLRLRGGMQIFVKTLTGKTITLEVESSDTIDNVKAKIQDKEGIPPDQQRLIFAGKQLEDGRTLADYNIQKESTLHLVLRLRGGK</sequence>
<accession>P0CG83</accession>
<accession>O82079</accession>
<accession>P03993</accession>
<accession>P69314</accession>
<evidence type="ECO:0000250" key="1"/>
<evidence type="ECO:0000255" key="2">
    <source>
        <dbReference type="PROSITE-ProRule" id="PRU00214"/>
    </source>
</evidence>
<evidence type="ECO:0000305" key="3"/>
<feature type="chain" id="PRO_0000396387" description="Ubiquitin">
    <location>
        <begin position="1" status="less than"/>
        <end position="18"/>
    </location>
</feature>
<feature type="chain" id="PRO_0000396388" description="Ubiquitin">
    <location>
        <begin position="19"/>
        <end position="94"/>
    </location>
</feature>
<feature type="chain" id="PRO_0000396389" description="Ubiquitin">
    <location>
        <begin position="95"/>
        <end position="170"/>
    </location>
</feature>
<feature type="propeptide" id="PRO_0000396390">
    <location>
        <position position="171"/>
    </location>
</feature>
<feature type="domain" description="Ubiquitin-like 1" evidence="2">
    <location>
        <begin position="1" status="less than"/>
        <end position="18"/>
    </location>
</feature>
<feature type="domain" description="Ubiquitin-like 2" evidence="2">
    <location>
        <begin position="19"/>
        <end position="94"/>
    </location>
</feature>
<feature type="domain" description="Ubiquitin-like 3" evidence="2">
    <location>
        <begin position="95"/>
        <end position="170"/>
    </location>
</feature>
<feature type="cross-link" description="Glycyl lysine isopeptide (Lys-Gly) (interchain with G-Cter in ubiquitin)" evidence="1">
    <location>
        <position position="66"/>
    </location>
</feature>
<feature type="cross-link" description="Glycyl lysine isopeptide (Gly-Lys) (interchain with K-? in acceptor proteins)" evidence="2">
    <location>
        <position position="94"/>
    </location>
</feature>
<feature type="non-terminal residue">
    <location>
        <position position="1"/>
    </location>
</feature>
<protein>
    <recommendedName>
        <fullName>Polyubiquitin</fullName>
    </recommendedName>
    <component>
        <recommendedName>
            <fullName>Ubiquitin</fullName>
        </recommendedName>
    </component>
</protein>
<name>UBIQP_HORVU</name>